<dbReference type="EMBL" id="Z54141">
    <property type="protein sequence ID" value="CAA90839.1"/>
    <property type="molecule type" value="Genomic_DNA"/>
</dbReference>
<dbReference type="EMBL" id="BK006946">
    <property type="protein sequence ID" value="DAA10222.1"/>
    <property type="molecule type" value="Genomic_DNA"/>
</dbReference>
<dbReference type="PIR" id="S69879">
    <property type="entry name" value="S69879"/>
</dbReference>
<dbReference type="RefSeq" id="NP_014054.3">
    <property type="nucleotide sequence ID" value="NM_001182834.3"/>
</dbReference>
<dbReference type="SMR" id="Q04898"/>
<dbReference type="BioGRID" id="35500">
    <property type="interactions" value="54"/>
</dbReference>
<dbReference type="FunCoup" id="Q04898">
    <property type="interactions" value="60"/>
</dbReference>
<dbReference type="STRING" id="4932.YMR321C"/>
<dbReference type="PaxDb" id="4932-YMR321C"/>
<dbReference type="PeptideAtlas" id="Q04898"/>
<dbReference type="EnsemblFungi" id="YMR321C_mRNA">
    <property type="protein sequence ID" value="YMR321C"/>
    <property type="gene ID" value="YMR321C"/>
</dbReference>
<dbReference type="GeneID" id="855371"/>
<dbReference type="KEGG" id="sce:YMR321C"/>
<dbReference type="AGR" id="SGD:S000004940"/>
<dbReference type="SGD" id="S000004940">
    <property type="gene designation" value="YMR321C"/>
</dbReference>
<dbReference type="VEuPathDB" id="FungiDB:YMR321C"/>
<dbReference type="eggNOG" id="KOG1579">
    <property type="taxonomic scope" value="Eukaryota"/>
</dbReference>
<dbReference type="GeneTree" id="ENSGT00510000049619"/>
<dbReference type="HOGENOM" id="CLU_2147814_0_0_1"/>
<dbReference type="InParanoid" id="Q04898"/>
<dbReference type="OMA" id="NKLNSWD"/>
<dbReference type="OrthoDB" id="261426at2759"/>
<dbReference type="BioCyc" id="YEAST:G3O-32984-MONOMER"/>
<dbReference type="PRO" id="PR:Q04898"/>
<dbReference type="Proteomes" id="UP000002311">
    <property type="component" value="Chromosome XIII"/>
</dbReference>
<dbReference type="RNAct" id="Q04898">
    <property type="molecule type" value="protein"/>
</dbReference>
<dbReference type="GO" id="GO:0008168">
    <property type="term" value="F:methyltransferase activity"/>
    <property type="evidence" value="ECO:0007669"/>
    <property type="project" value="UniProtKB-KW"/>
</dbReference>
<dbReference type="GO" id="GO:0032259">
    <property type="term" value="P:methylation"/>
    <property type="evidence" value="ECO:0007669"/>
    <property type="project" value="UniProtKB-KW"/>
</dbReference>
<dbReference type="FunFam" id="3.20.20.330:FF:000016">
    <property type="entry name" value="Putative uncharacterized protein YMR321C"/>
    <property type="match status" value="1"/>
</dbReference>
<dbReference type="Gene3D" id="3.20.20.330">
    <property type="entry name" value="Homocysteine-binding-like domain"/>
    <property type="match status" value="1"/>
</dbReference>
<dbReference type="InterPro" id="IPR003726">
    <property type="entry name" value="HCY_dom"/>
</dbReference>
<dbReference type="InterPro" id="IPR036589">
    <property type="entry name" value="HCY_dom_sf"/>
</dbReference>
<dbReference type="PANTHER" id="PTHR11103:SF10">
    <property type="entry name" value="HOMOCYSTEINE S-METHYLTRANSFERASE 1-RELATED"/>
    <property type="match status" value="1"/>
</dbReference>
<dbReference type="PANTHER" id="PTHR11103">
    <property type="entry name" value="SLR1189 PROTEIN"/>
    <property type="match status" value="1"/>
</dbReference>
<dbReference type="Pfam" id="PF02574">
    <property type="entry name" value="S-methyl_trans"/>
    <property type="match status" value="1"/>
</dbReference>
<dbReference type="SUPFAM" id="SSF82282">
    <property type="entry name" value="Homocysteine S-methyltransferase"/>
    <property type="match status" value="1"/>
</dbReference>
<dbReference type="PROSITE" id="PS50970">
    <property type="entry name" value="HCY"/>
    <property type="match status" value="1"/>
</dbReference>
<proteinExistence type="predicted"/>
<accession>Q04898</accession>
<accession>D6W0E8</accession>
<evidence type="ECO:0000255" key="1">
    <source>
        <dbReference type="PROSITE-ProRule" id="PRU00333"/>
    </source>
</evidence>
<keyword id="KW-0489">Methyltransferase</keyword>
<keyword id="KW-1185">Reference proteome</keyword>
<keyword id="KW-0808">Transferase</keyword>
<organism>
    <name type="scientific">Saccharomyces cerevisiae (strain ATCC 204508 / S288c)</name>
    <name type="common">Baker's yeast</name>
    <dbReference type="NCBI Taxonomy" id="559292"/>
    <lineage>
        <taxon>Eukaryota</taxon>
        <taxon>Fungi</taxon>
        <taxon>Dikarya</taxon>
        <taxon>Ascomycota</taxon>
        <taxon>Saccharomycotina</taxon>
        <taxon>Saccharomycetes</taxon>
        <taxon>Saccharomycetales</taxon>
        <taxon>Saccharomycetaceae</taxon>
        <taxon>Saccharomyces</taxon>
    </lineage>
</organism>
<reference key="1">
    <citation type="journal article" date="1997" name="Nature">
        <title>The nucleotide sequence of Saccharomyces cerevisiae chromosome XIII.</title>
        <authorList>
            <person name="Bowman S."/>
            <person name="Churcher C.M."/>
            <person name="Badcock K."/>
            <person name="Brown D."/>
            <person name="Chillingworth T."/>
            <person name="Connor R."/>
            <person name="Dedman K."/>
            <person name="Devlin K."/>
            <person name="Gentles S."/>
            <person name="Hamlin N."/>
            <person name="Hunt S."/>
            <person name="Jagels K."/>
            <person name="Lye G."/>
            <person name="Moule S."/>
            <person name="Odell C."/>
            <person name="Pearson D."/>
            <person name="Rajandream M.A."/>
            <person name="Rice P."/>
            <person name="Skelton J."/>
            <person name="Walsh S.V."/>
            <person name="Whitehead S."/>
            <person name="Barrell B.G."/>
        </authorList>
    </citation>
    <scope>NUCLEOTIDE SEQUENCE [LARGE SCALE GENOMIC DNA]</scope>
    <source>
        <strain>ATCC 204508 / S288c</strain>
    </source>
</reference>
<reference key="2">
    <citation type="journal article" date="2014" name="G3 (Bethesda)">
        <title>The reference genome sequence of Saccharomyces cerevisiae: Then and now.</title>
        <authorList>
            <person name="Engel S.R."/>
            <person name="Dietrich F.S."/>
            <person name="Fisk D.G."/>
            <person name="Binkley G."/>
            <person name="Balakrishnan R."/>
            <person name="Costanzo M.C."/>
            <person name="Dwight S.S."/>
            <person name="Hitz B.C."/>
            <person name="Karra K."/>
            <person name="Nash R.S."/>
            <person name="Weng S."/>
            <person name="Wong E.D."/>
            <person name="Lloyd P."/>
            <person name="Skrzypek M.S."/>
            <person name="Miyasato S.R."/>
            <person name="Simison M."/>
            <person name="Cherry J.M."/>
        </authorList>
    </citation>
    <scope>GENOME REANNOTATION</scope>
    <source>
        <strain>ATCC 204508 / S288c</strain>
    </source>
</reference>
<sequence>MMDLGDKINPNLSFLGINCVSFNQSPDILESLHQALPNMALLAYPNSGEVYDTEKKIWLPNSDKLNSWDTVVKQYISSGARIIGGCCRTSPKDIQEISAAVKKYT</sequence>
<feature type="chain" id="PRO_0000114626" description="Putative uncharacterized protein YMR321C">
    <location>
        <begin position="1"/>
        <end position="105"/>
    </location>
</feature>
<feature type="domain" description="Hcy-binding" evidence="1">
    <location>
        <begin position="1"/>
        <end position="101"/>
    </location>
</feature>
<protein>
    <recommendedName>
        <fullName>Putative uncharacterized protein YMR321C</fullName>
    </recommendedName>
</protein>
<gene>
    <name type="ordered locus">YMR321C</name>
    <name type="ORF">YM9924.13C</name>
</gene>
<name>YM99_YEAST</name>